<comment type="function">
    <text evidence="1">Molecular chaperone. Has ATPase activity.</text>
</comment>
<comment type="subunit">
    <text evidence="1">Homodimer.</text>
</comment>
<comment type="subcellular location">
    <subcellularLocation>
        <location evidence="1">Cytoplasm</location>
    </subcellularLocation>
</comment>
<comment type="similarity">
    <text evidence="1">Belongs to the heat shock protein 90 family.</text>
</comment>
<dbReference type="EMBL" id="BX936398">
    <property type="protein sequence ID" value="CAH20235.1"/>
    <property type="molecule type" value="Genomic_DNA"/>
</dbReference>
<dbReference type="SMR" id="Q66DP8"/>
<dbReference type="KEGG" id="yps:YPTB0995"/>
<dbReference type="Proteomes" id="UP000001011">
    <property type="component" value="Chromosome"/>
</dbReference>
<dbReference type="GO" id="GO:0005737">
    <property type="term" value="C:cytoplasm"/>
    <property type="evidence" value="ECO:0007669"/>
    <property type="project" value="UniProtKB-SubCell"/>
</dbReference>
<dbReference type="GO" id="GO:0005524">
    <property type="term" value="F:ATP binding"/>
    <property type="evidence" value="ECO:0007669"/>
    <property type="project" value="UniProtKB-UniRule"/>
</dbReference>
<dbReference type="GO" id="GO:0016887">
    <property type="term" value="F:ATP hydrolysis activity"/>
    <property type="evidence" value="ECO:0007669"/>
    <property type="project" value="InterPro"/>
</dbReference>
<dbReference type="GO" id="GO:0140662">
    <property type="term" value="F:ATP-dependent protein folding chaperone"/>
    <property type="evidence" value="ECO:0007669"/>
    <property type="project" value="InterPro"/>
</dbReference>
<dbReference type="GO" id="GO:0051082">
    <property type="term" value="F:unfolded protein binding"/>
    <property type="evidence" value="ECO:0007669"/>
    <property type="project" value="UniProtKB-UniRule"/>
</dbReference>
<dbReference type="CDD" id="cd16927">
    <property type="entry name" value="HATPase_Hsp90-like"/>
    <property type="match status" value="1"/>
</dbReference>
<dbReference type="FunFam" id="1.20.120.790:FF:000002">
    <property type="entry name" value="Molecular chaperone HtpG"/>
    <property type="match status" value="1"/>
</dbReference>
<dbReference type="FunFam" id="3.30.230.80:FF:000002">
    <property type="entry name" value="Molecular chaperone HtpG"/>
    <property type="match status" value="1"/>
</dbReference>
<dbReference type="FunFam" id="3.30.565.10:FF:000009">
    <property type="entry name" value="Molecular chaperone HtpG"/>
    <property type="match status" value="1"/>
</dbReference>
<dbReference type="FunFam" id="3.40.50.11260:FF:000002">
    <property type="entry name" value="Molecular chaperone HtpG"/>
    <property type="match status" value="1"/>
</dbReference>
<dbReference type="Gene3D" id="3.30.230.80">
    <property type="match status" value="1"/>
</dbReference>
<dbReference type="Gene3D" id="3.40.50.11260">
    <property type="match status" value="1"/>
</dbReference>
<dbReference type="Gene3D" id="1.20.120.790">
    <property type="entry name" value="Heat shock protein 90, C-terminal domain"/>
    <property type="match status" value="1"/>
</dbReference>
<dbReference type="Gene3D" id="3.30.565.10">
    <property type="entry name" value="Histidine kinase-like ATPase, C-terminal domain"/>
    <property type="match status" value="1"/>
</dbReference>
<dbReference type="HAMAP" id="MF_00505">
    <property type="entry name" value="HSP90"/>
    <property type="match status" value="1"/>
</dbReference>
<dbReference type="InterPro" id="IPR036890">
    <property type="entry name" value="HATPase_C_sf"/>
</dbReference>
<dbReference type="InterPro" id="IPR019805">
    <property type="entry name" value="Heat_shock_protein_90_CS"/>
</dbReference>
<dbReference type="InterPro" id="IPR037196">
    <property type="entry name" value="HSP90_C"/>
</dbReference>
<dbReference type="InterPro" id="IPR001404">
    <property type="entry name" value="Hsp90_fam"/>
</dbReference>
<dbReference type="InterPro" id="IPR020575">
    <property type="entry name" value="Hsp90_N"/>
</dbReference>
<dbReference type="InterPro" id="IPR020568">
    <property type="entry name" value="Ribosomal_Su5_D2-typ_SF"/>
</dbReference>
<dbReference type="NCBIfam" id="NF003555">
    <property type="entry name" value="PRK05218.1"/>
    <property type="match status" value="1"/>
</dbReference>
<dbReference type="PANTHER" id="PTHR11528">
    <property type="entry name" value="HEAT SHOCK PROTEIN 90 FAMILY MEMBER"/>
    <property type="match status" value="1"/>
</dbReference>
<dbReference type="Pfam" id="PF13589">
    <property type="entry name" value="HATPase_c_3"/>
    <property type="match status" value="1"/>
</dbReference>
<dbReference type="Pfam" id="PF00183">
    <property type="entry name" value="HSP90"/>
    <property type="match status" value="1"/>
</dbReference>
<dbReference type="PIRSF" id="PIRSF002583">
    <property type="entry name" value="Hsp90"/>
    <property type="match status" value="1"/>
</dbReference>
<dbReference type="PRINTS" id="PR00775">
    <property type="entry name" value="HEATSHOCK90"/>
</dbReference>
<dbReference type="SMART" id="SM00387">
    <property type="entry name" value="HATPase_c"/>
    <property type="match status" value="1"/>
</dbReference>
<dbReference type="SUPFAM" id="SSF55874">
    <property type="entry name" value="ATPase domain of HSP90 chaperone/DNA topoisomerase II/histidine kinase"/>
    <property type="match status" value="1"/>
</dbReference>
<dbReference type="SUPFAM" id="SSF110942">
    <property type="entry name" value="HSP90 C-terminal domain"/>
    <property type="match status" value="1"/>
</dbReference>
<dbReference type="SUPFAM" id="SSF54211">
    <property type="entry name" value="Ribosomal protein S5 domain 2-like"/>
    <property type="match status" value="1"/>
</dbReference>
<dbReference type="PROSITE" id="PS00298">
    <property type="entry name" value="HSP90"/>
    <property type="match status" value="1"/>
</dbReference>
<reference key="1">
    <citation type="journal article" date="2004" name="Proc. Natl. Acad. Sci. U.S.A.">
        <title>Insights into the evolution of Yersinia pestis through whole-genome comparison with Yersinia pseudotuberculosis.</title>
        <authorList>
            <person name="Chain P.S.G."/>
            <person name="Carniel E."/>
            <person name="Larimer F.W."/>
            <person name="Lamerdin J."/>
            <person name="Stoutland P.O."/>
            <person name="Regala W.M."/>
            <person name="Georgescu A.M."/>
            <person name="Vergez L.M."/>
            <person name="Land M.L."/>
            <person name="Motin V.L."/>
            <person name="Brubaker R.R."/>
            <person name="Fowler J."/>
            <person name="Hinnebusch J."/>
            <person name="Marceau M."/>
            <person name="Medigue C."/>
            <person name="Simonet M."/>
            <person name="Chenal-Francisque V."/>
            <person name="Souza B."/>
            <person name="Dacheux D."/>
            <person name="Elliott J.M."/>
            <person name="Derbise A."/>
            <person name="Hauser L.J."/>
            <person name="Garcia E."/>
        </authorList>
    </citation>
    <scope>NUCLEOTIDE SEQUENCE [LARGE SCALE GENOMIC DNA]</scope>
    <source>
        <strain>IP32953</strain>
    </source>
</reference>
<protein>
    <recommendedName>
        <fullName evidence="1">Chaperone protein HtpG</fullName>
    </recommendedName>
    <alternativeName>
        <fullName evidence="1">Heat shock protein HtpG</fullName>
    </alternativeName>
    <alternativeName>
        <fullName evidence="1">High temperature protein G</fullName>
    </alternativeName>
</protein>
<keyword id="KW-0067">ATP-binding</keyword>
<keyword id="KW-0143">Chaperone</keyword>
<keyword id="KW-0963">Cytoplasm</keyword>
<keyword id="KW-0547">Nucleotide-binding</keyword>
<keyword id="KW-0346">Stress response</keyword>
<evidence type="ECO:0000255" key="1">
    <source>
        <dbReference type="HAMAP-Rule" id="MF_00505"/>
    </source>
</evidence>
<proteinExistence type="inferred from homology"/>
<feature type="chain" id="PRO_0000224240" description="Chaperone protein HtpG">
    <location>
        <begin position="1"/>
        <end position="624"/>
    </location>
</feature>
<feature type="region of interest" description="A; substrate-binding" evidence="1">
    <location>
        <begin position="1"/>
        <end position="336"/>
    </location>
</feature>
<feature type="region of interest" description="B" evidence="1">
    <location>
        <begin position="337"/>
        <end position="552"/>
    </location>
</feature>
<feature type="region of interest" description="C" evidence="1">
    <location>
        <begin position="553"/>
        <end position="624"/>
    </location>
</feature>
<name>HTPG_YERPS</name>
<accession>Q66DP8</accession>
<gene>
    <name evidence="1" type="primary">htpG</name>
    <name type="ordered locus">YPTB0995</name>
</gene>
<organism>
    <name type="scientific">Yersinia pseudotuberculosis serotype I (strain IP32953)</name>
    <dbReference type="NCBI Taxonomy" id="273123"/>
    <lineage>
        <taxon>Bacteria</taxon>
        <taxon>Pseudomonadati</taxon>
        <taxon>Pseudomonadota</taxon>
        <taxon>Gammaproteobacteria</taxon>
        <taxon>Enterobacterales</taxon>
        <taxon>Yersiniaceae</taxon>
        <taxon>Yersinia</taxon>
    </lineage>
</organism>
<sequence>MNMKGQETRGFQSEVKQLLHLMIHSLYSNKEIFLRELISNASDAADKLRFRALSNPELFEGDGELRVRLSFDKEKRTLTLSDNGIGMTRDEVIDNLGTIAKSGTKAFLESIGSDQAKDSQLIGQFGVGFYSAFIVADKVTVRTRAAGAPADTGVFWESAGEGDYTIADITKDERGTEITLHLREGEDEYLDDWRLRSVISKYSDHIALPVEIQVKNEEDGTVTWEKINKAQALWTRGKAEISDDEYKAFYKHIAHDFTDPLSWSHNRVEGKQEYTSLLYIPAQAPWDMWNRDHKHGLKLYVQRVFIMDEAEQFMPNYLRFVRGLIDSNDLPLNVSREILQDSRITQNLRSALTKRVLQMLEKLAKDDAEKYQQFWQQFGMALKEGPAEDGSNKETIAKLLRFASTHTDSSAQTVSLEDYVSRMAEGQEKIYYITADSYAAAKSSPHLELFRKKGIEVLLLSDRIDEWMMSYLTEFEGKAFQSVSKADDSLNKLADEENPEQQEAEKALEPFVERVKTLLGERVKDVRLTHRLTDTPAIVTTDADEMSTQMAKLFAAAGQQAPEVKYIFELNPDHGLVKRAAEVTDDTQFAQWVELLLDQALLAERGTLEDPNQFIRRMNQLLTA</sequence>